<name>HTPX_ACIAD</name>
<feature type="chain" id="PRO_1000020835" description="Protease HtpX">
    <location>
        <begin position="1"/>
        <end position="301"/>
    </location>
</feature>
<feature type="transmembrane region" description="Helical" evidence="1">
    <location>
        <begin position="4"/>
        <end position="24"/>
    </location>
</feature>
<feature type="transmembrane region" description="Helical" evidence="1">
    <location>
        <begin position="38"/>
        <end position="58"/>
    </location>
</feature>
<feature type="transmembrane region" description="Helical" evidence="1">
    <location>
        <begin position="155"/>
        <end position="175"/>
    </location>
</feature>
<feature type="transmembrane region" description="Helical" evidence="1">
    <location>
        <begin position="200"/>
        <end position="220"/>
    </location>
</feature>
<feature type="active site" evidence="1">
    <location>
        <position position="148"/>
    </location>
</feature>
<feature type="binding site" evidence="1">
    <location>
        <position position="147"/>
    </location>
    <ligand>
        <name>Zn(2+)</name>
        <dbReference type="ChEBI" id="CHEBI:29105"/>
        <note>catalytic</note>
    </ligand>
</feature>
<feature type="binding site" evidence="1">
    <location>
        <position position="151"/>
    </location>
    <ligand>
        <name>Zn(2+)</name>
        <dbReference type="ChEBI" id="CHEBI:29105"/>
        <note>catalytic</note>
    </ligand>
</feature>
<feature type="binding site" evidence="1">
    <location>
        <position position="226"/>
    </location>
    <ligand>
        <name>Zn(2+)</name>
        <dbReference type="ChEBI" id="CHEBI:29105"/>
        <note>catalytic</note>
    </ligand>
</feature>
<comment type="cofactor">
    <cofactor evidence="1">
        <name>Zn(2+)</name>
        <dbReference type="ChEBI" id="CHEBI:29105"/>
    </cofactor>
    <text evidence="1">Binds 1 zinc ion per subunit.</text>
</comment>
<comment type="subcellular location">
    <subcellularLocation>
        <location evidence="1">Cell inner membrane</location>
        <topology evidence="1">Multi-pass membrane protein</topology>
    </subcellularLocation>
</comment>
<comment type="similarity">
    <text evidence="1">Belongs to the peptidase M48B family.</text>
</comment>
<protein>
    <recommendedName>
        <fullName evidence="1">Protease HtpX</fullName>
        <ecNumber evidence="1">3.4.24.-</ecNumber>
    </recommendedName>
    <alternativeName>
        <fullName evidence="1">Heat shock protein HtpX</fullName>
    </alternativeName>
</protein>
<proteinExistence type="inferred from homology"/>
<gene>
    <name evidence="1" type="primary">htpX</name>
    <name type="ordered locus">ACIAD2833</name>
</gene>
<keyword id="KW-0997">Cell inner membrane</keyword>
<keyword id="KW-1003">Cell membrane</keyword>
<keyword id="KW-0378">Hydrolase</keyword>
<keyword id="KW-0472">Membrane</keyword>
<keyword id="KW-0479">Metal-binding</keyword>
<keyword id="KW-0482">Metalloprotease</keyword>
<keyword id="KW-0645">Protease</keyword>
<keyword id="KW-0346">Stress response</keyword>
<keyword id="KW-0812">Transmembrane</keyword>
<keyword id="KW-1133">Transmembrane helix</keyword>
<keyword id="KW-0862">Zinc</keyword>
<organism>
    <name type="scientific">Acinetobacter baylyi (strain ATCC 33305 / BD413 / ADP1)</name>
    <dbReference type="NCBI Taxonomy" id="62977"/>
    <lineage>
        <taxon>Bacteria</taxon>
        <taxon>Pseudomonadati</taxon>
        <taxon>Pseudomonadota</taxon>
        <taxon>Gammaproteobacteria</taxon>
        <taxon>Moraxellales</taxon>
        <taxon>Moraxellaceae</taxon>
        <taxon>Acinetobacter</taxon>
    </lineage>
</organism>
<dbReference type="EC" id="3.4.24.-" evidence="1"/>
<dbReference type="EMBL" id="CR543861">
    <property type="protein sequence ID" value="CAG69564.1"/>
    <property type="molecule type" value="Genomic_DNA"/>
</dbReference>
<dbReference type="RefSeq" id="WP_004929289.1">
    <property type="nucleotide sequence ID" value="NC_005966.1"/>
</dbReference>
<dbReference type="SMR" id="Q6F8Q1"/>
<dbReference type="STRING" id="202950.GCA_001485005_03017"/>
<dbReference type="MEROPS" id="M48.002"/>
<dbReference type="GeneID" id="45235069"/>
<dbReference type="KEGG" id="aci:ACIAD2833"/>
<dbReference type="eggNOG" id="COG0501">
    <property type="taxonomic scope" value="Bacteria"/>
</dbReference>
<dbReference type="HOGENOM" id="CLU_042266_1_0_6"/>
<dbReference type="OrthoDB" id="15218at2"/>
<dbReference type="BioCyc" id="ASP62977:ACIAD_RS12770-MONOMER"/>
<dbReference type="Proteomes" id="UP000000430">
    <property type="component" value="Chromosome"/>
</dbReference>
<dbReference type="GO" id="GO:0005886">
    <property type="term" value="C:plasma membrane"/>
    <property type="evidence" value="ECO:0007669"/>
    <property type="project" value="UniProtKB-SubCell"/>
</dbReference>
<dbReference type="GO" id="GO:0004222">
    <property type="term" value="F:metalloendopeptidase activity"/>
    <property type="evidence" value="ECO:0007669"/>
    <property type="project" value="UniProtKB-UniRule"/>
</dbReference>
<dbReference type="GO" id="GO:0008270">
    <property type="term" value="F:zinc ion binding"/>
    <property type="evidence" value="ECO:0007669"/>
    <property type="project" value="UniProtKB-UniRule"/>
</dbReference>
<dbReference type="GO" id="GO:0006508">
    <property type="term" value="P:proteolysis"/>
    <property type="evidence" value="ECO:0007669"/>
    <property type="project" value="UniProtKB-KW"/>
</dbReference>
<dbReference type="CDD" id="cd07335">
    <property type="entry name" value="M48B_HtpX_like"/>
    <property type="match status" value="1"/>
</dbReference>
<dbReference type="Gene3D" id="3.30.2010.10">
    <property type="entry name" value="Metalloproteases ('zincins'), catalytic domain"/>
    <property type="match status" value="1"/>
</dbReference>
<dbReference type="HAMAP" id="MF_00188">
    <property type="entry name" value="Pept_M48_protease_HtpX"/>
    <property type="match status" value="1"/>
</dbReference>
<dbReference type="InterPro" id="IPR050083">
    <property type="entry name" value="HtpX_protease"/>
</dbReference>
<dbReference type="InterPro" id="IPR022919">
    <property type="entry name" value="Pept_M48_protease_HtpX"/>
</dbReference>
<dbReference type="InterPro" id="IPR001915">
    <property type="entry name" value="Peptidase_M48"/>
</dbReference>
<dbReference type="NCBIfam" id="NF003965">
    <property type="entry name" value="PRK05457.1"/>
    <property type="match status" value="1"/>
</dbReference>
<dbReference type="PANTHER" id="PTHR43221">
    <property type="entry name" value="PROTEASE HTPX"/>
    <property type="match status" value="1"/>
</dbReference>
<dbReference type="PANTHER" id="PTHR43221:SF1">
    <property type="entry name" value="PROTEASE HTPX"/>
    <property type="match status" value="1"/>
</dbReference>
<dbReference type="Pfam" id="PF01435">
    <property type="entry name" value="Peptidase_M48"/>
    <property type="match status" value="1"/>
</dbReference>
<sequence length="301" mass="32682">MMRIGLFLLTNLAVLVVAGIILSLFGVGSYHGAGGLNLGNLLVICFVFGMVGSLISLLMSKWMAKKTTGTEIIDPNAPRNQAEAWLLQTVAELSQRAGIQMPEVGIFPSYQSNAFATGWNKNDALVSVSTGLMERMNKDELRAVLAHEIGHVANGDMVTLALIQGVVNAFVMFFARVVGDFIDRNVFGRQDGEAPGMGYFAITIVLDIVFGILASAIVMWFSRHREYRADEAGARLAGKQAMISALLRLQAESEMPDQMPKEMKAFAIAEGKEQGFSLAALFQTHPSIEQRVAALQQLNCP</sequence>
<reference key="1">
    <citation type="journal article" date="2004" name="Nucleic Acids Res.">
        <title>Unique features revealed by the genome sequence of Acinetobacter sp. ADP1, a versatile and naturally transformation competent bacterium.</title>
        <authorList>
            <person name="Barbe V."/>
            <person name="Vallenet D."/>
            <person name="Fonknechten N."/>
            <person name="Kreimeyer A."/>
            <person name="Oztas S."/>
            <person name="Labarre L."/>
            <person name="Cruveiller S."/>
            <person name="Robert C."/>
            <person name="Duprat S."/>
            <person name="Wincker P."/>
            <person name="Ornston L.N."/>
            <person name="Weissenbach J."/>
            <person name="Marliere P."/>
            <person name="Cohen G.N."/>
            <person name="Medigue C."/>
        </authorList>
    </citation>
    <scope>NUCLEOTIDE SEQUENCE [LARGE SCALE GENOMIC DNA]</scope>
    <source>
        <strain>ATCC 33305 / BD413 / ADP1</strain>
    </source>
</reference>
<accession>Q6F8Q1</accession>
<evidence type="ECO:0000255" key="1">
    <source>
        <dbReference type="HAMAP-Rule" id="MF_00188"/>
    </source>
</evidence>